<feature type="transit peptide" description="Mitochondrion" evidence="1">
    <location>
        <begin position="1"/>
        <end status="unknown"/>
    </location>
</feature>
<feature type="chain" id="PRO_0000020015" description="Probable NADH dehydrogenase [ubiquinone] iron-sulfur protein 8, mitochondrial">
    <location>
        <begin status="unknown"/>
        <end position="212"/>
    </location>
</feature>
<feature type="domain" description="4Fe-4S ferredoxin-type 1" evidence="4">
    <location>
        <begin position="104"/>
        <end position="133"/>
    </location>
</feature>
<feature type="domain" description="4Fe-4S ferredoxin-type 2" evidence="4">
    <location>
        <begin position="143"/>
        <end position="172"/>
    </location>
</feature>
<feature type="binding site" evidence="4">
    <location>
        <position position="113"/>
    </location>
    <ligand>
        <name>[4Fe-4S] cluster</name>
        <dbReference type="ChEBI" id="CHEBI:49883"/>
        <label>1</label>
    </ligand>
</feature>
<feature type="binding site" evidence="4">
    <location>
        <position position="116"/>
    </location>
    <ligand>
        <name>[4Fe-4S] cluster</name>
        <dbReference type="ChEBI" id="CHEBI:49883"/>
        <label>1</label>
    </ligand>
</feature>
<feature type="binding site" evidence="4">
    <location>
        <position position="119"/>
    </location>
    <ligand>
        <name>[4Fe-4S] cluster</name>
        <dbReference type="ChEBI" id="CHEBI:49883"/>
        <label>1</label>
    </ligand>
</feature>
<feature type="binding site" evidence="4">
    <location>
        <position position="123"/>
    </location>
    <ligand>
        <name>[4Fe-4S] cluster</name>
        <dbReference type="ChEBI" id="CHEBI:49883"/>
        <label>2</label>
    </ligand>
</feature>
<feature type="binding site" evidence="4">
    <location>
        <position position="152"/>
    </location>
    <ligand>
        <name>[4Fe-4S] cluster</name>
        <dbReference type="ChEBI" id="CHEBI:49883"/>
        <label>2</label>
    </ligand>
</feature>
<feature type="binding site" evidence="4">
    <location>
        <position position="155"/>
    </location>
    <ligand>
        <name>[4Fe-4S] cluster</name>
        <dbReference type="ChEBI" id="CHEBI:49883"/>
        <label>2</label>
    </ligand>
</feature>
<feature type="binding site" evidence="4">
    <location>
        <position position="158"/>
    </location>
    <ligand>
        <name>[4Fe-4S] cluster</name>
        <dbReference type="ChEBI" id="CHEBI:49883"/>
        <label>2</label>
    </ligand>
</feature>
<feature type="binding site" evidence="4">
    <location>
        <position position="162"/>
    </location>
    <ligand>
        <name>[4Fe-4S] cluster</name>
        <dbReference type="ChEBI" id="CHEBI:49883"/>
        <label>1</label>
    </ligand>
</feature>
<gene>
    <name evidence="6" type="primary">ndus-8</name>
    <name evidence="6" type="ORF">T20H4.5</name>
</gene>
<accession>Q22619</accession>
<comment type="function">
    <text evidence="1">Core subunit of the mitochondrial membrane respiratory chain NADH dehydrogenase (Complex I) that is believed to belong to the minimal assembly required for catalysis. Complex I functions in the transfer of electrons from NADH to the respiratory chain. The immediate electron acceptor for the enzyme is believed to be ubiquinone (By similarity).</text>
</comment>
<comment type="catalytic activity">
    <reaction evidence="2">
        <text>a ubiquinone + NADH + 5 H(+)(in) = a ubiquinol + NAD(+) + 4 H(+)(out)</text>
        <dbReference type="Rhea" id="RHEA:29091"/>
        <dbReference type="Rhea" id="RHEA-COMP:9565"/>
        <dbReference type="Rhea" id="RHEA-COMP:9566"/>
        <dbReference type="ChEBI" id="CHEBI:15378"/>
        <dbReference type="ChEBI" id="CHEBI:16389"/>
        <dbReference type="ChEBI" id="CHEBI:17976"/>
        <dbReference type="ChEBI" id="CHEBI:57540"/>
        <dbReference type="ChEBI" id="CHEBI:57945"/>
        <dbReference type="EC" id="7.1.1.2"/>
    </reaction>
</comment>
<comment type="cofactor">
    <cofactor evidence="2">
        <name>[4Fe-4S] cluster</name>
        <dbReference type="ChEBI" id="CHEBI:49883"/>
    </cofactor>
    <text evidence="2">Binds 2 [4Fe-4S] cluster.</text>
</comment>
<comment type="subunit">
    <text evidence="1">Complex I is composed of 45 different subunits This is a component of the iron-sulfur (IP) fragment of the enzyme.</text>
</comment>
<comment type="subcellular location">
    <subcellularLocation>
        <location evidence="3">Mitochondrion</location>
    </subcellularLocation>
</comment>
<comment type="similarity">
    <text evidence="5">Belongs to the complex I 23 kDa subunit family.</text>
</comment>
<organism>
    <name type="scientific">Caenorhabditis elegans</name>
    <dbReference type="NCBI Taxonomy" id="6239"/>
    <lineage>
        <taxon>Eukaryota</taxon>
        <taxon>Metazoa</taxon>
        <taxon>Ecdysozoa</taxon>
        <taxon>Nematoda</taxon>
        <taxon>Chromadorea</taxon>
        <taxon>Rhabditida</taxon>
        <taxon>Rhabditina</taxon>
        <taxon>Rhabditomorpha</taxon>
        <taxon>Rhabditoidea</taxon>
        <taxon>Rhabditidae</taxon>
        <taxon>Peloderinae</taxon>
        <taxon>Caenorhabditis</taxon>
    </lineage>
</organism>
<name>NDUS8_CAEEL</name>
<sequence>MAMKSVAVLTKGMFGRIPAQLAVSSVPSNTIQKRSNYKFVGMPNETDGTLAGDLNYGLHNVFFTELFRGFGVMLGHVFMEPATINYPFEKGPLSSRFRGEHALRRYPSGEERCIACKLCEAICPAQAITIEAETRPDGSRRTTRYDIDMTKCIYCGLCQEACPVDAIVEGPNFEYSTETHEELLYNKEKLLLNGDRWEPELASNLQAEYLYR</sequence>
<protein>
    <recommendedName>
        <fullName>Probable NADH dehydrogenase [ubiquinone] iron-sulfur protein 8, mitochondrial</fullName>
        <ecNumber evidence="2">7.1.1.2</ecNumber>
    </recommendedName>
    <alternativeName>
        <fullName>Complex I-23kD</fullName>
        <shortName>CI-23kD</shortName>
    </alternativeName>
    <alternativeName>
        <fullName>NADH-ubiquinone oxidoreductase 23 kDa subunit</fullName>
    </alternativeName>
</protein>
<evidence type="ECO:0000250" key="1"/>
<evidence type="ECO:0000250" key="2">
    <source>
        <dbReference type="UniProtKB" id="Q56224"/>
    </source>
</evidence>
<evidence type="ECO:0000255" key="3"/>
<evidence type="ECO:0000255" key="4">
    <source>
        <dbReference type="PROSITE-ProRule" id="PRU00711"/>
    </source>
</evidence>
<evidence type="ECO:0000305" key="5"/>
<evidence type="ECO:0000312" key="6">
    <source>
        <dbReference type="WormBase" id="T20H4.5"/>
    </source>
</evidence>
<proteinExistence type="evidence at transcript level"/>
<keyword id="KW-0004">4Fe-4S</keyword>
<keyword id="KW-0249">Electron transport</keyword>
<keyword id="KW-0408">Iron</keyword>
<keyword id="KW-0411">Iron-sulfur</keyword>
<keyword id="KW-0479">Metal-binding</keyword>
<keyword id="KW-0496">Mitochondrion</keyword>
<keyword id="KW-0520">NAD</keyword>
<keyword id="KW-0560">Oxidoreductase</keyword>
<keyword id="KW-1185">Reference proteome</keyword>
<keyword id="KW-0677">Repeat</keyword>
<keyword id="KW-0679">Respiratory chain</keyword>
<keyword id="KW-0809">Transit peptide</keyword>
<keyword id="KW-1278">Translocase</keyword>
<keyword id="KW-0813">Transport</keyword>
<keyword id="KW-0830">Ubiquinone</keyword>
<dbReference type="EC" id="7.1.1.2" evidence="2"/>
<dbReference type="EMBL" id="AF140272">
    <property type="protein sequence ID" value="AAD34863.1"/>
    <property type="molecule type" value="mRNA"/>
</dbReference>
<dbReference type="EMBL" id="FO081693">
    <property type="protein sequence ID" value="CCD73352.1"/>
    <property type="molecule type" value="Genomic_DNA"/>
</dbReference>
<dbReference type="PIR" id="T16914">
    <property type="entry name" value="T16914"/>
</dbReference>
<dbReference type="SMR" id="Q22619"/>
<dbReference type="BioGRID" id="41235">
    <property type="interactions" value="93"/>
</dbReference>
<dbReference type="DIP" id="DIP-24953N"/>
<dbReference type="FunCoup" id="Q22619">
    <property type="interactions" value="2339"/>
</dbReference>
<dbReference type="STRING" id="6239.T20H4.5.1"/>
<dbReference type="PaxDb" id="6239-T20H4.5"/>
<dbReference type="PeptideAtlas" id="Q22619"/>
<dbReference type="EnsemblMetazoa" id="T20H4.5.1">
    <property type="protein sequence ID" value="T20H4.5.1"/>
    <property type="gene ID" value="WBGene00020636"/>
</dbReference>
<dbReference type="KEGG" id="cel:CELE_T20H4.5"/>
<dbReference type="UCSC" id="T20H4.5">
    <property type="organism name" value="c. elegans"/>
</dbReference>
<dbReference type="AGR" id="WB:WBGene00020636"/>
<dbReference type="CTD" id="176023"/>
<dbReference type="WormBase" id="T20H4.5">
    <property type="protein sequence ID" value="CE00832"/>
    <property type="gene ID" value="WBGene00020636"/>
    <property type="gene designation" value="ndus-8"/>
</dbReference>
<dbReference type="eggNOG" id="KOG3256">
    <property type="taxonomic scope" value="Eukaryota"/>
</dbReference>
<dbReference type="GeneTree" id="ENSGT00390000003049"/>
<dbReference type="HOGENOM" id="CLU_067218_5_1_1"/>
<dbReference type="InParanoid" id="Q22619"/>
<dbReference type="OMA" id="QFFRAPY"/>
<dbReference type="OrthoDB" id="204405at2759"/>
<dbReference type="PhylomeDB" id="Q22619"/>
<dbReference type="Reactome" id="R-CEL-6799198">
    <property type="pathway name" value="Complex I biogenesis"/>
</dbReference>
<dbReference type="PRO" id="PR:Q22619"/>
<dbReference type="Proteomes" id="UP000001940">
    <property type="component" value="Chromosome III"/>
</dbReference>
<dbReference type="Bgee" id="WBGene00020636">
    <property type="expression patterns" value="Expressed in pharyngeal muscle cell (C elegans) and 4 other cell types or tissues"/>
</dbReference>
<dbReference type="GO" id="GO:0005739">
    <property type="term" value="C:mitochondrion"/>
    <property type="evidence" value="ECO:0000314"/>
    <property type="project" value="WormBase"/>
</dbReference>
<dbReference type="GO" id="GO:0045271">
    <property type="term" value="C:respiratory chain complex I"/>
    <property type="evidence" value="ECO:0000250"/>
    <property type="project" value="WormBase"/>
</dbReference>
<dbReference type="GO" id="GO:0051539">
    <property type="term" value="F:4 iron, 4 sulfur cluster binding"/>
    <property type="evidence" value="ECO:0007669"/>
    <property type="project" value="UniProtKB-KW"/>
</dbReference>
<dbReference type="GO" id="GO:0046872">
    <property type="term" value="F:metal ion binding"/>
    <property type="evidence" value="ECO:0007669"/>
    <property type="project" value="UniProtKB-KW"/>
</dbReference>
<dbReference type="GO" id="GO:0008137">
    <property type="term" value="F:NADH dehydrogenase (ubiquinone) activity"/>
    <property type="evidence" value="ECO:0007669"/>
    <property type="project" value="UniProtKB-EC"/>
</dbReference>
<dbReference type="GO" id="GO:0006120">
    <property type="term" value="P:mitochondrial electron transport, NADH to ubiquinone"/>
    <property type="evidence" value="ECO:0000315"/>
    <property type="project" value="WormBase"/>
</dbReference>
<dbReference type="GO" id="GO:0032981">
    <property type="term" value="P:mitochondrial respiratory chain complex I assembly"/>
    <property type="evidence" value="ECO:0000318"/>
    <property type="project" value="GO_Central"/>
</dbReference>
<dbReference type="GO" id="GO:0009410">
    <property type="term" value="P:response to xenobiotic stimulus"/>
    <property type="evidence" value="ECO:0000315"/>
    <property type="project" value="WormBase"/>
</dbReference>
<dbReference type="FunFam" id="3.30.70.3270:FF:000001">
    <property type="entry name" value="NADH-quinone oxidoreductase subunit I 1"/>
    <property type="match status" value="1"/>
</dbReference>
<dbReference type="Gene3D" id="3.30.70.3270">
    <property type="match status" value="1"/>
</dbReference>
<dbReference type="HAMAP" id="MF_01351">
    <property type="entry name" value="NDH1_NuoI"/>
    <property type="match status" value="1"/>
</dbReference>
<dbReference type="InterPro" id="IPR017896">
    <property type="entry name" value="4Fe4S_Fe-S-bd"/>
</dbReference>
<dbReference type="InterPro" id="IPR017900">
    <property type="entry name" value="4Fe4S_Fe_S_CS"/>
</dbReference>
<dbReference type="InterPro" id="IPR010226">
    <property type="entry name" value="NADH_quinone_OxRdtase_chainI"/>
</dbReference>
<dbReference type="NCBIfam" id="TIGR01971">
    <property type="entry name" value="NuoI"/>
    <property type="match status" value="1"/>
</dbReference>
<dbReference type="NCBIfam" id="NF004538">
    <property type="entry name" value="PRK05888.1-4"/>
    <property type="match status" value="1"/>
</dbReference>
<dbReference type="NCBIfam" id="NF004539">
    <property type="entry name" value="PRK05888.1-5"/>
    <property type="match status" value="1"/>
</dbReference>
<dbReference type="PANTHER" id="PTHR10849:SF20">
    <property type="entry name" value="NADH DEHYDROGENASE [UBIQUINONE] IRON-SULFUR PROTEIN 8, MITOCHONDRIAL"/>
    <property type="match status" value="1"/>
</dbReference>
<dbReference type="PANTHER" id="PTHR10849">
    <property type="entry name" value="NADH DEHYDROGENASE UBIQUINONE IRON-SULFUR PROTEIN 8, MITOCHONDRIAL"/>
    <property type="match status" value="1"/>
</dbReference>
<dbReference type="Pfam" id="PF12838">
    <property type="entry name" value="Fer4_7"/>
    <property type="match status" value="1"/>
</dbReference>
<dbReference type="SUPFAM" id="SSF54862">
    <property type="entry name" value="4Fe-4S ferredoxins"/>
    <property type="match status" value="1"/>
</dbReference>
<dbReference type="PROSITE" id="PS00198">
    <property type="entry name" value="4FE4S_FER_1"/>
    <property type="match status" value="2"/>
</dbReference>
<dbReference type="PROSITE" id="PS51379">
    <property type="entry name" value="4FE4S_FER_2"/>
    <property type="match status" value="2"/>
</dbReference>
<reference key="1">
    <citation type="journal article" date="1999" name="Nucleic Acids Res.">
        <title>Caenorhabditis elegans mRNAs that encode a protein similar to ADARs derive from an operon containing six genes.</title>
        <authorList>
            <person name="Hough R.F."/>
            <person name="Lingam A.T."/>
            <person name="Bass B.L."/>
        </authorList>
    </citation>
    <scope>NUCLEOTIDE SEQUENCE [MRNA]</scope>
    <source>
        <strain>Bristol N2</strain>
    </source>
</reference>
<reference key="2">
    <citation type="journal article" date="1998" name="Science">
        <title>Genome sequence of the nematode C. elegans: a platform for investigating biology.</title>
        <authorList>
            <consortium name="The C. elegans sequencing consortium"/>
        </authorList>
    </citation>
    <scope>NUCLEOTIDE SEQUENCE [LARGE SCALE GENOMIC DNA]</scope>
    <source>
        <strain>Bristol N2</strain>
    </source>
</reference>